<proteinExistence type="evidence at protein level"/>
<feature type="chain" id="PRO_0000073032" description="Acrosin inhibitor 1">
    <location>
        <begin position="1"/>
        <end position="63"/>
    </location>
</feature>
<feature type="domain" description="Kazal-like" evidence="1">
    <location>
        <begin position="8"/>
        <end position="63"/>
    </location>
</feature>
<feature type="site" description="Reactive bond">
    <location>
        <begin position="23"/>
        <end position="24"/>
    </location>
</feature>
<feature type="disulfide bond" evidence="1">
    <location>
        <begin position="14"/>
        <end position="43"/>
    </location>
</feature>
<feature type="disulfide bond" evidence="1">
    <location>
        <begin position="21"/>
        <end position="40"/>
    </location>
</feature>
<feature type="disulfide bond" evidence="1">
    <location>
        <begin position="29"/>
        <end position="61"/>
    </location>
</feature>
<protein>
    <recommendedName>
        <fullName>Acrosin inhibitor 1</fullName>
    </recommendedName>
    <alternativeName>
        <fullName>Acrosin inhibitor I</fullName>
    </alternativeName>
    <alternativeName>
        <fullName>BUSI-I</fullName>
    </alternativeName>
</protein>
<name>IAC1_BOVIN</name>
<reference key="1">
    <citation type="journal article" date="1983" name="Hoppe-Seyler's Z. Physiol. Chem.">
        <title>Homologies in the structures of bull seminal plasma acrosin inhibitors and comparison with other homologous proteinase inhibitors of the Kazal type.</title>
        <authorList>
            <person name="Meloun B."/>
            <person name="Cechova D."/>
            <person name="Jonakova V."/>
        </authorList>
    </citation>
    <scope>PROTEIN SEQUENCE</scope>
</reference>
<organism>
    <name type="scientific">Bos taurus</name>
    <name type="common">Bovine</name>
    <dbReference type="NCBI Taxonomy" id="9913"/>
    <lineage>
        <taxon>Eukaryota</taxon>
        <taxon>Metazoa</taxon>
        <taxon>Chordata</taxon>
        <taxon>Craniata</taxon>
        <taxon>Vertebrata</taxon>
        <taxon>Euteleostomi</taxon>
        <taxon>Mammalia</taxon>
        <taxon>Eutheria</taxon>
        <taxon>Laurasiatheria</taxon>
        <taxon>Artiodactyla</taxon>
        <taxon>Ruminantia</taxon>
        <taxon>Pecora</taxon>
        <taxon>Bovidae</taxon>
        <taxon>Bovinae</taxon>
        <taxon>Bos</taxon>
    </lineage>
</organism>
<keyword id="KW-0903">Direct protein sequencing</keyword>
<keyword id="KW-1015">Disulfide bond</keyword>
<keyword id="KW-0646">Protease inhibitor</keyword>
<keyword id="KW-1185">Reference proteome</keyword>
<keyword id="KW-0964">Secreted</keyword>
<keyword id="KW-0722">Serine protease inhibitor</keyword>
<sequence>EIYFEPDFGFPPDCKVYTEACTREYNPICDSAAKTYSNECTFCNEKMNNDADIHFNHFGECEY</sequence>
<evidence type="ECO:0000255" key="1">
    <source>
        <dbReference type="PROSITE-ProRule" id="PRU00798"/>
    </source>
</evidence>
<comment type="function">
    <text>Strong inhibitor of acrosin.</text>
</comment>
<comment type="subcellular location">
    <subcellularLocation>
        <location>Secreted</location>
    </subcellularLocation>
</comment>
<comment type="tissue specificity">
    <text>Seminal plasma.</text>
</comment>
<accession>P01000</accession>
<dbReference type="PIR" id="A01234">
    <property type="entry name" value="XTBO1"/>
</dbReference>
<dbReference type="SMR" id="P01000"/>
<dbReference type="FunCoup" id="P01000">
    <property type="interactions" value="1"/>
</dbReference>
<dbReference type="STRING" id="9913.ENSBTAP00000056921"/>
<dbReference type="MEROPS" id="I01.014"/>
<dbReference type="InParanoid" id="P01000"/>
<dbReference type="Proteomes" id="UP000009136">
    <property type="component" value="Unplaced"/>
</dbReference>
<dbReference type="GO" id="GO:0005576">
    <property type="term" value="C:extracellular region"/>
    <property type="evidence" value="ECO:0007669"/>
    <property type="project" value="UniProtKB-SubCell"/>
</dbReference>
<dbReference type="GO" id="GO:0004867">
    <property type="term" value="F:serine-type endopeptidase inhibitor activity"/>
    <property type="evidence" value="ECO:0007669"/>
    <property type="project" value="UniProtKB-KW"/>
</dbReference>
<dbReference type="Gene3D" id="3.30.60.30">
    <property type="match status" value="1"/>
</dbReference>
<dbReference type="InterPro" id="IPR002350">
    <property type="entry name" value="Kazal_dom"/>
</dbReference>
<dbReference type="InterPro" id="IPR036058">
    <property type="entry name" value="Kazal_dom_sf"/>
</dbReference>
<dbReference type="PANTHER" id="PTHR21312">
    <property type="entry name" value="SERINE PROTEASE INHIBITOR"/>
    <property type="match status" value="1"/>
</dbReference>
<dbReference type="PANTHER" id="PTHR21312:SF30">
    <property type="entry name" value="SERINE PROTEASE INHIBITOR KAZAL-TYPE 11-RELATED"/>
    <property type="match status" value="1"/>
</dbReference>
<dbReference type="Pfam" id="PF00050">
    <property type="entry name" value="Kazal_1"/>
    <property type="match status" value="1"/>
</dbReference>
<dbReference type="SMART" id="SM00280">
    <property type="entry name" value="KAZAL"/>
    <property type="match status" value="1"/>
</dbReference>
<dbReference type="SUPFAM" id="SSF100895">
    <property type="entry name" value="Kazal-type serine protease inhibitors"/>
    <property type="match status" value="1"/>
</dbReference>
<dbReference type="PROSITE" id="PS00282">
    <property type="entry name" value="KAZAL_1"/>
    <property type="match status" value="1"/>
</dbReference>
<dbReference type="PROSITE" id="PS51465">
    <property type="entry name" value="KAZAL_2"/>
    <property type="match status" value="1"/>
</dbReference>